<proteinExistence type="inferred from homology"/>
<accession>P66470</accession>
<accession>Q9X8U4</accession>
<gene>
    <name evidence="1" type="primary">rpsR1</name>
    <name type="ordered locus">SCO3908</name>
    <name type="ORF">SCH24.30</name>
</gene>
<dbReference type="EMBL" id="AL939118">
    <property type="protein sequence ID" value="CAB42736.1"/>
    <property type="molecule type" value="Genomic_DNA"/>
</dbReference>
<dbReference type="PIR" id="T36595">
    <property type="entry name" value="T36595"/>
</dbReference>
<dbReference type="RefSeq" id="NP_628094.1">
    <property type="nucleotide sequence ID" value="NC_003888.3"/>
</dbReference>
<dbReference type="SMR" id="P66470"/>
<dbReference type="FunCoup" id="P66470">
    <property type="interactions" value="230"/>
</dbReference>
<dbReference type="STRING" id="100226.gene:17761535"/>
<dbReference type="PaxDb" id="100226-SCO3908"/>
<dbReference type="KEGG" id="sco:SCO3908"/>
<dbReference type="PATRIC" id="fig|100226.15.peg.3982"/>
<dbReference type="eggNOG" id="COG0238">
    <property type="taxonomic scope" value="Bacteria"/>
</dbReference>
<dbReference type="HOGENOM" id="CLU_148710_2_2_11"/>
<dbReference type="InParanoid" id="P66470"/>
<dbReference type="OrthoDB" id="9812008at2"/>
<dbReference type="PhylomeDB" id="P66470"/>
<dbReference type="PRO" id="PR:P66470"/>
<dbReference type="Proteomes" id="UP000001973">
    <property type="component" value="Chromosome"/>
</dbReference>
<dbReference type="GO" id="GO:0022627">
    <property type="term" value="C:cytosolic small ribosomal subunit"/>
    <property type="evidence" value="ECO:0000318"/>
    <property type="project" value="GO_Central"/>
</dbReference>
<dbReference type="GO" id="GO:0070181">
    <property type="term" value="F:small ribosomal subunit rRNA binding"/>
    <property type="evidence" value="ECO:0000318"/>
    <property type="project" value="GO_Central"/>
</dbReference>
<dbReference type="GO" id="GO:0003735">
    <property type="term" value="F:structural constituent of ribosome"/>
    <property type="evidence" value="ECO:0000318"/>
    <property type="project" value="GO_Central"/>
</dbReference>
<dbReference type="GO" id="GO:0006412">
    <property type="term" value="P:translation"/>
    <property type="evidence" value="ECO:0000318"/>
    <property type="project" value="GO_Central"/>
</dbReference>
<dbReference type="FunFam" id="4.10.640.10:FF:000004">
    <property type="entry name" value="30S ribosomal protein S18"/>
    <property type="match status" value="1"/>
</dbReference>
<dbReference type="Gene3D" id="4.10.640.10">
    <property type="entry name" value="Ribosomal protein S18"/>
    <property type="match status" value="1"/>
</dbReference>
<dbReference type="HAMAP" id="MF_00270">
    <property type="entry name" value="Ribosomal_bS18"/>
    <property type="match status" value="1"/>
</dbReference>
<dbReference type="InterPro" id="IPR001648">
    <property type="entry name" value="Ribosomal_bS18"/>
</dbReference>
<dbReference type="InterPro" id="IPR018275">
    <property type="entry name" value="Ribosomal_bS18_CS"/>
</dbReference>
<dbReference type="InterPro" id="IPR036870">
    <property type="entry name" value="Ribosomal_bS18_sf"/>
</dbReference>
<dbReference type="NCBIfam" id="TIGR00165">
    <property type="entry name" value="S18"/>
    <property type="match status" value="1"/>
</dbReference>
<dbReference type="PANTHER" id="PTHR13479">
    <property type="entry name" value="30S RIBOSOMAL PROTEIN S18"/>
    <property type="match status" value="1"/>
</dbReference>
<dbReference type="PANTHER" id="PTHR13479:SF62">
    <property type="entry name" value="SMALL RIBOSOMAL SUBUNIT PROTEIN BS18A"/>
    <property type="match status" value="1"/>
</dbReference>
<dbReference type="Pfam" id="PF01084">
    <property type="entry name" value="Ribosomal_S18"/>
    <property type="match status" value="1"/>
</dbReference>
<dbReference type="PRINTS" id="PR00974">
    <property type="entry name" value="RIBOSOMALS18"/>
</dbReference>
<dbReference type="SUPFAM" id="SSF46911">
    <property type="entry name" value="Ribosomal protein S18"/>
    <property type="match status" value="1"/>
</dbReference>
<dbReference type="PROSITE" id="PS00057">
    <property type="entry name" value="RIBOSOMAL_S18"/>
    <property type="match status" value="1"/>
</dbReference>
<keyword id="KW-1185">Reference proteome</keyword>
<keyword id="KW-0687">Ribonucleoprotein</keyword>
<keyword id="KW-0689">Ribosomal protein</keyword>
<keyword id="KW-0694">RNA-binding</keyword>
<keyword id="KW-0699">rRNA-binding</keyword>
<organism>
    <name type="scientific">Streptomyces coelicolor (strain ATCC BAA-471 / A3(2) / M145)</name>
    <dbReference type="NCBI Taxonomy" id="100226"/>
    <lineage>
        <taxon>Bacteria</taxon>
        <taxon>Bacillati</taxon>
        <taxon>Actinomycetota</taxon>
        <taxon>Actinomycetes</taxon>
        <taxon>Kitasatosporales</taxon>
        <taxon>Streptomycetaceae</taxon>
        <taxon>Streptomyces</taxon>
        <taxon>Streptomyces albidoflavus group</taxon>
    </lineage>
</organism>
<name>RS181_STRCO</name>
<evidence type="ECO:0000255" key="1">
    <source>
        <dbReference type="HAMAP-Rule" id="MF_00270"/>
    </source>
</evidence>
<evidence type="ECO:0000305" key="2"/>
<protein>
    <recommendedName>
        <fullName evidence="1">Small ribosomal subunit protein bS18A</fullName>
    </recommendedName>
    <alternativeName>
        <fullName evidence="2">30S ribosomal protein S18 1</fullName>
    </alternativeName>
</protein>
<comment type="function">
    <text evidence="1">Binds as a heterodimer with protein bS6 to the central domain of the 16S rRNA, where it helps stabilize the platform of the 30S subunit.</text>
</comment>
<comment type="subunit">
    <text evidence="1">Part of the 30S ribosomal subunit. Forms a tight heterodimer with protein bS6.</text>
</comment>
<comment type="similarity">
    <text evidence="1">Belongs to the bacterial ribosomal protein bS18 family.</text>
</comment>
<feature type="chain" id="PRO_0000111236" description="Small ribosomal subunit protein bS18A">
    <location>
        <begin position="1"/>
        <end position="78"/>
    </location>
</feature>
<reference key="1">
    <citation type="journal article" date="2002" name="Nature">
        <title>Complete genome sequence of the model actinomycete Streptomyces coelicolor A3(2).</title>
        <authorList>
            <person name="Bentley S.D."/>
            <person name="Chater K.F."/>
            <person name="Cerdeno-Tarraga A.-M."/>
            <person name="Challis G.L."/>
            <person name="Thomson N.R."/>
            <person name="James K.D."/>
            <person name="Harris D.E."/>
            <person name="Quail M.A."/>
            <person name="Kieser H."/>
            <person name="Harper D."/>
            <person name="Bateman A."/>
            <person name="Brown S."/>
            <person name="Chandra G."/>
            <person name="Chen C.W."/>
            <person name="Collins M."/>
            <person name="Cronin A."/>
            <person name="Fraser A."/>
            <person name="Goble A."/>
            <person name="Hidalgo J."/>
            <person name="Hornsby T."/>
            <person name="Howarth S."/>
            <person name="Huang C.-H."/>
            <person name="Kieser T."/>
            <person name="Larke L."/>
            <person name="Murphy L.D."/>
            <person name="Oliver K."/>
            <person name="O'Neil S."/>
            <person name="Rabbinowitsch E."/>
            <person name="Rajandream M.A."/>
            <person name="Rutherford K.M."/>
            <person name="Rutter S."/>
            <person name="Seeger K."/>
            <person name="Saunders D."/>
            <person name="Sharp S."/>
            <person name="Squares R."/>
            <person name="Squares S."/>
            <person name="Taylor K."/>
            <person name="Warren T."/>
            <person name="Wietzorrek A."/>
            <person name="Woodward J.R."/>
            <person name="Barrell B.G."/>
            <person name="Parkhill J."/>
            <person name="Hopwood D.A."/>
        </authorList>
    </citation>
    <scope>NUCLEOTIDE SEQUENCE [LARGE SCALE GENOMIC DNA]</scope>
    <source>
        <strain>ATCC BAA-471 / A3(2) / M145</strain>
    </source>
</reference>
<sequence length="78" mass="8990">MAKPPVRKPKKKVCAFCKDKVTYVDYKDTNMLRKFISDRGKIRARRVTGNCTQHQRDVATAVKNSREMALLPYTSTAR</sequence>